<sequence length="419" mass="47605">MNIIDELEWRGAIYQQTDEEGLRKWVEEKQISLYCGIDPSGDSMHIGHLIPFMILRRFQNAGHRPIILVGGATGTIGDPSGKKEERKLQSMEQISKNVESLRVQLGKIFDFEGDSAASMVNNYDWTKDVSILDFLRDYGKEFNVNTMLSKDIVASRLEVGISFTEFAYQILQAMDFNHLYEFNDCRLQIGGSDQWGNITAGLDLIRKKQGENAKAFGLTIPLLTKADGTKFGKSEGGAIWLNPEKTTPYEFYQFWINTDDRDVVKYLKYFTFLTEAEIDELAKQVEEEPHLRAAQKTLAAEMTKFVHSEEALEQALKISKALFSGDVTALTADEIEQGFKDVPTFVAEDAEVNLVDWLVTLGIEPSKRQAREDVTNGAIYINGERQQNVEKVIDASDRIENKFTIVRRGKKKYFLVSYK</sequence>
<reference key="1">
    <citation type="journal article" date="2001" name="Science">
        <title>Comparative genomics of Listeria species.</title>
        <authorList>
            <person name="Glaser P."/>
            <person name="Frangeul L."/>
            <person name="Buchrieser C."/>
            <person name="Rusniok C."/>
            <person name="Amend A."/>
            <person name="Baquero F."/>
            <person name="Berche P."/>
            <person name="Bloecker H."/>
            <person name="Brandt P."/>
            <person name="Chakraborty T."/>
            <person name="Charbit A."/>
            <person name="Chetouani F."/>
            <person name="Couve E."/>
            <person name="de Daruvar A."/>
            <person name="Dehoux P."/>
            <person name="Domann E."/>
            <person name="Dominguez-Bernal G."/>
            <person name="Duchaud E."/>
            <person name="Durant L."/>
            <person name="Dussurget O."/>
            <person name="Entian K.-D."/>
            <person name="Fsihi H."/>
            <person name="Garcia-del Portillo F."/>
            <person name="Garrido P."/>
            <person name="Gautier L."/>
            <person name="Goebel W."/>
            <person name="Gomez-Lopez N."/>
            <person name="Hain T."/>
            <person name="Hauf J."/>
            <person name="Jackson D."/>
            <person name="Jones L.-M."/>
            <person name="Kaerst U."/>
            <person name="Kreft J."/>
            <person name="Kuhn M."/>
            <person name="Kunst F."/>
            <person name="Kurapkat G."/>
            <person name="Madueno E."/>
            <person name="Maitournam A."/>
            <person name="Mata Vicente J."/>
            <person name="Ng E."/>
            <person name="Nedjari H."/>
            <person name="Nordsiek G."/>
            <person name="Novella S."/>
            <person name="de Pablos B."/>
            <person name="Perez-Diaz J.-C."/>
            <person name="Purcell R."/>
            <person name="Remmel B."/>
            <person name="Rose M."/>
            <person name="Schlueter T."/>
            <person name="Simoes N."/>
            <person name="Tierrez A."/>
            <person name="Vazquez-Boland J.-A."/>
            <person name="Voss H."/>
            <person name="Wehland J."/>
            <person name="Cossart P."/>
        </authorList>
    </citation>
    <scope>NUCLEOTIDE SEQUENCE [LARGE SCALE GENOMIC DNA]</scope>
    <source>
        <strain>ATCC BAA-680 / CLIP 11262</strain>
    </source>
</reference>
<dbReference type="EC" id="6.1.1.1" evidence="1"/>
<dbReference type="EMBL" id="AL596169">
    <property type="protein sequence ID" value="CAC96870.1"/>
    <property type="molecule type" value="Genomic_DNA"/>
</dbReference>
<dbReference type="PIR" id="AF1637">
    <property type="entry name" value="AF1637"/>
</dbReference>
<dbReference type="RefSeq" id="WP_010991627.1">
    <property type="nucleotide sequence ID" value="NC_003212.1"/>
</dbReference>
<dbReference type="SMR" id="Q92BB1"/>
<dbReference type="STRING" id="272626.gene:17565970"/>
<dbReference type="GeneID" id="93235021"/>
<dbReference type="KEGG" id="lin:tyrS"/>
<dbReference type="eggNOG" id="COG0162">
    <property type="taxonomic scope" value="Bacteria"/>
</dbReference>
<dbReference type="HOGENOM" id="CLU_024003_0_3_9"/>
<dbReference type="OrthoDB" id="9804243at2"/>
<dbReference type="Proteomes" id="UP000002513">
    <property type="component" value="Chromosome"/>
</dbReference>
<dbReference type="GO" id="GO:0005829">
    <property type="term" value="C:cytosol"/>
    <property type="evidence" value="ECO:0007669"/>
    <property type="project" value="TreeGrafter"/>
</dbReference>
<dbReference type="GO" id="GO:0005524">
    <property type="term" value="F:ATP binding"/>
    <property type="evidence" value="ECO:0007669"/>
    <property type="project" value="UniProtKB-UniRule"/>
</dbReference>
<dbReference type="GO" id="GO:0003723">
    <property type="term" value="F:RNA binding"/>
    <property type="evidence" value="ECO:0007669"/>
    <property type="project" value="UniProtKB-KW"/>
</dbReference>
<dbReference type="GO" id="GO:0004831">
    <property type="term" value="F:tyrosine-tRNA ligase activity"/>
    <property type="evidence" value="ECO:0007669"/>
    <property type="project" value="UniProtKB-UniRule"/>
</dbReference>
<dbReference type="GO" id="GO:0006437">
    <property type="term" value="P:tyrosyl-tRNA aminoacylation"/>
    <property type="evidence" value="ECO:0007669"/>
    <property type="project" value="UniProtKB-UniRule"/>
</dbReference>
<dbReference type="CDD" id="cd00165">
    <property type="entry name" value="S4"/>
    <property type="match status" value="1"/>
</dbReference>
<dbReference type="CDD" id="cd00805">
    <property type="entry name" value="TyrRS_core"/>
    <property type="match status" value="1"/>
</dbReference>
<dbReference type="FunFam" id="1.10.240.10:FF:000001">
    <property type="entry name" value="Tyrosine--tRNA ligase"/>
    <property type="match status" value="1"/>
</dbReference>
<dbReference type="FunFam" id="3.10.290.10:FF:000012">
    <property type="entry name" value="Tyrosine--tRNA ligase"/>
    <property type="match status" value="1"/>
</dbReference>
<dbReference type="FunFam" id="3.40.50.620:FF:000008">
    <property type="entry name" value="Tyrosine--tRNA ligase"/>
    <property type="match status" value="1"/>
</dbReference>
<dbReference type="Gene3D" id="3.40.50.620">
    <property type="entry name" value="HUPs"/>
    <property type="match status" value="1"/>
</dbReference>
<dbReference type="Gene3D" id="3.10.290.10">
    <property type="entry name" value="RNA-binding S4 domain"/>
    <property type="match status" value="1"/>
</dbReference>
<dbReference type="Gene3D" id="1.10.240.10">
    <property type="entry name" value="Tyrosyl-Transfer RNA Synthetase"/>
    <property type="match status" value="1"/>
</dbReference>
<dbReference type="HAMAP" id="MF_02006">
    <property type="entry name" value="Tyr_tRNA_synth_type1"/>
    <property type="match status" value="1"/>
</dbReference>
<dbReference type="InterPro" id="IPR001412">
    <property type="entry name" value="aa-tRNA-synth_I_CS"/>
</dbReference>
<dbReference type="InterPro" id="IPR002305">
    <property type="entry name" value="aa-tRNA-synth_Ic"/>
</dbReference>
<dbReference type="InterPro" id="IPR014729">
    <property type="entry name" value="Rossmann-like_a/b/a_fold"/>
</dbReference>
<dbReference type="InterPro" id="IPR002942">
    <property type="entry name" value="S4_RNA-bd"/>
</dbReference>
<dbReference type="InterPro" id="IPR036986">
    <property type="entry name" value="S4_RNA-bd_sf"/>
</dbReference>
<dbReference type="InterPro" id="IPR054608">
    <property type="entry name" value="SYY-like_C"/>
</dbReference>
<dbReference type="InterPro" id="IPR002307">
    <property type="entry name" value="Tyr-tRNA-ligase"/>
</dbReference>
<dbReference type="InterPro" id="IPR024088">
    <property type="entry name" value="Tyr-tRNA-ligase_bac-type"/>
</dbReference>
<dbReference type="InterPro" id="IPR024107">
    <property type="entry name" value="Tyr-tRNA-ligase_bac_1"/>
</dbReference>
<dbReference type="NCBIfam" id="TIGR00234">
    <property type="entry name" value="tyrS"/>
    <property type="match status" value="1"/>
</dbReference>
<dbReference type="PANTHER" id="PTHR11766:SF0">
    <property type="entry name" value="TYROSINE--TRNA LIGASE, MITOCHONDRIAL"/>
    <property type="match status" value="1"/>
</dbReference>
<dbReference type="PANTHER" id="PTHR11766">
    <property type="entry name" value="TYROSYL-TRNA SYNTHETASE"/>
    <property type="match status" value="1"/>
</dbReference>
<dbReference type="Pfam" id="PF22421">
    <property type="entry name" value="SYY_C-terminal"/>
    <property type="match status" value="1"/>
</dbReference>
<dbReference type="Pfam" id="PF00579">
    <property type="entry name" value="tRNA-synt_1b"/>
    <property type="match status" value="1"/>
</dbReference>
<dbReference type="PRINTS" id="PR01040">
    <property type="entry name" value="TRNASYNTHTYR"/>
</dbReference>
<dbReference type="SMART" id="SM00363">
    <property type="entry name" value="S4"/>
    <property type="match status" value="1"/>
</dbReference>
<dbReference type="SUPFAM" id="SSF55174">
    <property type="entry name" value="Alpha-L RNA-binding motif"/>
    <property type="match status" value="1"/>
</dbReference>
<dbReference type="SUPFAM" id="SSF52374">
    <property type="entry name" value="Nucleotidylyl transferase"/>
    <property type="match status" value="1"/>
</dbReference>
<dbReference type="PROSITE" id="PS00178">
    <property type="entry name" value="AA_TRNA_LIGASE_I"/>
    <property type="match status" value="1"/>
</dbReference>
<dbReference type="PROSITE" id="PS50889">
    <property type="entry name" value="S4"/>
    <property type="match status" value="1"/>
</dbReference>
<organism>
    <name type="scientific">Listeria innocua serovar 6a (strain ATCC BAA-680 / CLIP 11262)</name>
    <dbReference type="NCBI Taxonomy" id="272626"/>
    <lineage>
        <taxon>Bacteria</taxon>
        <taxon>Bacillati</taxon>
        <taxon>Bacillota</taxon>
        <taxon>Bacilli</taxon>
        <taxon>Bacillales</taxon>
        <taxon>Listeriaceae</taxon>
        <taxon>Listeria</taxon>
    </lineage>
</organism>
<proteinExistence type="inferred from homology"/>
<accession>Q92BB1</accession>
<name>SYY_LISIN</name>
<evidence type="ECO:0000255" key="1">
    <source>
        <dbReference type="HAMAP-Rule" id="MF_02006"/>
    </source>
</evidence>
<protein>
    <recommendedName>
        <fullName evidence="1">Tyrosine--tRNA ligase</fullName>
        <ecNumber evidence="1">6.1.1.1</ecNumber>
    </recommendedName>
    <alternativeName>
        <fullName evidence="1">Tyrosyl-tRNA synthetase</fullName>
        <shortName evidence="1">TyrRS</shortName>
    </alternativeName>
</protein>
<gene>
    <name evidence="1" type="primary">tyrS</name>
    <name type="ordered locus">lin1639</name>
</gene>
<comment type="function">
    <text evidence="1">Catalyzes the attachment of tyrosine to tRNA(Tyr) in a two-step reaction: tyrosine is first activated by ATP to form Tyr-AMP and then transferred to the acceptor end of tRNA(Tyr).</text>
</comment>
<comment type="catalytic activity">
    <reaction evidence="1">
        <text>tRNA(Tyr) + L-tyrosine + ATP = L-tyrosyl-tRNA(Tyr) + AMP + diphosphate + H(+)</text>
        <dbReference type="Rhea" id="RHEA:10220"/>
        <dbReference type="Rhea" id="RHEA-COMP:9706"/>
        <dbReference type="Rhea" id="RHEA-COMP:9707"/>
        <dbReference type="ChEBI" id="CHEBI:15378"/>
        <dbReference type="ChEBI" id="CHEBI:30616"/>
        <dbReference type="ChEBI" id="CHEBI:33019"/>
        <dbReference type="ChEBI" id="CHEBI:58315"/>
        <dbReference type="ChEBI" id="CHEBI:78442"/>
        <dbReference type="ChEBI" id="CHEBI:78536"/>
        <dbReference type="ChEBI" id="CHEBI:456215"/>
        <dbReference type="EC" id="6.1.1.1"/>
    </reaction>
</comment>
<comment type="subunit">
    <text evidence="1">Homodimer.</text>
</comment>
<comment type="subcellular location">
    <subcellularLocation>
        <location evidence="1">Cytoplasm</location>
    </subcellularLocation>
</comment>
<comment type="similarity">
    <text evidence="1">Belongs to the class-I aminoacyl-tRNA synthetase family. TyrS type 1 subfamily.</text>
</comment>
<keyword id="KW-0030">Aminoacyl-tRNA synthetase</keyword>
<keyword id="KW-0067">ATP-binding</keyword>
<keyword id="KW-0963">Cytoplasm</keyword>
<keyword id="KW-0436">Ligase</keyword>
<keyword id="KW-0547">Nucleotide-binding</keyword>
<keyword id="KW-0648">Protein biosynthesis</keyword>
<keyword id="KW-0694">RNA-binding</keyword>
<feature type="chain" id="PRO_0000234722" description="Tyrosine--tRNA ligase">
    <location>
        <begin position="1"/>
        <end position="419"/>
    </location>
</feature>
<feature type="domain" description="S4 RNA-binding" evidence="1">
    <location>
        <begin position="352"/>
        <end position="418"/>
    </location>
</feature>
<feature type="short sequence motif" description="'HIGH' region">
    <location>
        <begin position="39"/>
        <end position="48"/>
    </location>
</feature>
<feature type="short sequence motif" description="'KMSKS' region">
    <location>
        <begin position="230"/>
        <end position="234"/>
    </location>
</feature>
<feature type="binding site" evidence="1">
    <location>
        <position position="34"/>
    </location>
    <ligand>
        <name>L-tyrosine</name>
        <dbReference type="ChEBI" id="CHEBI:58315"/>
    </ligand>
</feature>
<feature type="binding site" evidence="1">
    <location>
        <position position="168"/>
    </location>
    <ligand>
        <name>L-tyrosine</name>
        <dbReference type="ChEBI" id="CHEBI:58315"/>
    </ligand>
</feature>
<feature type="binding site" evidence="1">
    <location>
        <position position="172"/>
    </location>
    <ligand>
        <name>L-tyrosine</name>
        <dbReference type="ChEBI" id="CHEBI:58315"/>
    </ligand>
</feature>
<feature type="binding site" evidence="1">
    <location>
        <position position="233"/>
    </location>
    <ligand>
        <name>ATP</name>
        <dbReference type="ChEBI" id="CHEBI:30616"/>
    </ligand>
</feature>